<dbReference type="EC" id="1.1.1.44"/>
<dbReference type="EMBL" id="BA000003">
    <property type="protein sequence ID" value="BAB12826.1"/>
    <property type="molecule type" value="Genomic_DNA"/>
</dbReference>
<dbReference type="RefSeq" id="NP_239940.1">
    <property type="nucleotide sequence ID" value="NC_002528.1"/>
</dbReference>
<dbReference type="RefSeq" id="WP_010895948.1">
    <property type="nucleotide sequence ID" value="NC_002528.1"/>
</dbReference>
<dbReference type="SMR" id="P57208"/>
<dbReference type="STRING" id="563178.BUAP5A_105"/>
<dbReference type="EnsemblBacteria" id="BAB12826">
    <property type="protein sequence ID" value="BAB12826"/>
    <property type="gene ID" value="BAB12826"/>
</dbReference>
<dbReference type="KEGG" id="buc:BU107"/>
<dbReference type="PATRIC" id="fig|107806.10.peg.115"/>
<dbReference type="eggNOG" id="COG0362">
    <property type="taxonomic scope" value="Bacteria"/>
</dbReference>
<dbReference type="HOGENOM" id="CLU_024540_4_2_6"/>
<dbReference type="UniPathway" id="UPA00115">
    <property type="reaction ID" value="UER00410"/>
</dbReference>
<dbReference type="Proteomes" id="UP000001806">
    <property type="component" value="Chromosome"/>
</dbReference>
<dbReference type="GO" id="GO:0050661">
    <property type="term" value="F:NADP binding"/>
    <property type="evidence" value="ECO:0007669"/>
    <property type="project" value="InterPro"/>
</dbReference>
<dbReference type="GO" id="GO:0004616">
    <property type="term" value="F:phosphogluconate dehydrogenase (decarboxylating) activity"/>
    <property type="evidence" value="ECO:0000250"/>
    <property type="project" value="UniProtKB"/>
</dbReference>
<dbReference type="GO" id="GO:0019521">
    <property type="term" value="P:D-gluconate metabolic process"/>
    <property type="evidence" value="ECO:0007669"/>
    <property type="project" value="UniProtKB-KW"/>
</dbReference>
<dbReference type="GO" id="GO:0016054">
    <property type="term" value="P:organic acid catabolic process"/>
    <property type="evidence" value="ECO:0007669"/>
    <property type="project" value="UniProtKB-ARBA"/>
</dbReference>
<dbReference type="GO" id="GO:0006098">
    <property type="term" value="P:pentose-phosphate shunt"/>
    <property type="evidence" value="ECO:0000250"/>
    <property type="project" value="UniProtKB"/>
</dbReference>
<dbReference type="FunFam" id="1.10.1040.10:FF:000002">
    <property type="entry name" value="6-phosphogluconate dehydrogenase, decarboxylating"/>
    <property type="match status" value="1"/>
</dbReference>
<dbReference type="FunFam" id="1.20.5.320:FF:000001">
    <property type="entry name" value="6-phosphogluconate dehydrogenase, decarboxylating"/>
    <property type="match status" value="1"/>
</dbReference>
<dbReference type="FunFam" id="3.40.50.720:FF:000007">
    <property type="entry name" value="6-phosphogluconate dehydrogenase, decarboxylating"/>
    <property type="match status" value="1"/>
</dbReference>
<dbReference type="Gene3D" id="1.20.5.320">
    <property type="entry name" value="6-Phosphogluconate Dehydrogenase, domain 3"/>
    <property type="match status" value="1"/>
</dbReference>
<dbReference type="Gene3D" id="1.10.1040.10">
    <property type="entry name" value="N-(1-d-carboxylethyl)-l-norvaline Dehydrogenase, domain 2"/>
    <property type="match status" value="1"/>
</dbReference>
<dbReference type="Gene3D" id="3.40.50.720">
    <property type="entry name" value="NAD(P)-binding Rossmann-like Domain"/>
    <property type="match status" value="1"/>
</dbReference>
<dbReference type="InterPro" id="IPR008927">
    <property type="entry name" value="6-PGluconate_DH-like_C_sf"/>
</dbReference>
<dbReference type="InterPro" id="IPR013328">
    <property type="entry name" value="6PGD_dom2"/>
</dbReference>
<dbReference type="InterPro" id="IPR006114">
    <property type="entry name" value="6PGDH_C"/>
</dbReference>
<dbReference type="InterPro" id="IPR006113">
    <property type="entry name" value="6PGDH_Gnd/GntZ"/>
</dbReference>
<dbReference type="InterPro" id="IPR006115">
    <property type="entry name" value="6PGDH_NADP-bd"/>
</dbReference>
<dbReference type="InterPro" id="IPR006184">
    <property type="entry name" value="6PGdom_BS"/>
</dbReference>
<dbReference type="InterPro" id="IPR036291">
    <property type="entry name" value="NAD(P)-bd_dom_sf"/>
</dbReference>
<dbReference type="InterPro" id="IPR006183">
    <property type="entry name" value="Pgluconate_DH"/>
</dbReference>
<dbReference type="NCBIfam" id="TIGR00873">
    <property type="entry name" value="gnd"/>
    <property type="match status" value="1"/>
</dbReference>
<dbReference type="NCBIfam" id="NF006765">
    <property type="entry name" value="PRK09287.1"/>
    <property type="match status" value="1"/>
</dbReference>
<dbReference type="PANTHER" id="PTHR11811">
    <property type="entry name" value="6-PHOSPHOGLUCONATE DEHYDROGENASE"/>
    <property type="match status" value="1"/>
</dbReference>
<dbReference type="Pfam" id="PF00393">
    <property type="entry name" value="6PGD"/>
    <property type="match status" value="1"/>
</dbReference>
<dbReference type="Pfam" id="PF03446">
    <property type="entry name" value="NAD_binding_2"/>
    <property type="match status" value="1"/>
</dbReference>
<dbReference type="PIRSF" id="PIRSF000109">
    <property type="entry name" value="6PGD"/>
    <property type="match status" value="1"/>
</dbReference>
<dbReference type="PRINTS" id="PR00076">
    <property type="entry name" value="6PGDHDRGNASE"/>
</dbReference>
<dbReference type="SMART" id="SM01350">
    <property type="entry name" value="6PGD"/>
    <property type="match status" value="1"/>
</dbReference>
<dbReference type="SUPFAM" id="SSF48179">
    <property type="entry name" value="6-phosphogluconate dehydrogenase C-terminal domain-like"/>
    <property type="match status" value="1"/>
</dbReference>
<dbReference type="SUPFAM" id="SSF51735">
    <property type="entry name" value="NAD(P)-binding Rossmann-fold domains"/>
    <property type="match status" value="1"/>
</dbReference>
<dbReference type="PROSITE" id="PS00461">
    <property type="entry name" value="6PGD"/>
    <property type="match status" value="1"/>
</dbReference>
<keyword id="KW-0311">Gluconate utilization</keyword>
<keyword id="KW-0521">NADP</keyword>
<keyword id="KW-0560">Oxidoreductase</keyword>
<keyword id="KW-0570">Pentose shunt</keyword>
<keyword id="KW-1185">Reference proteome</keyword>
<gene>
    <name type="primary">gnd</name>
    <name type="ordered locus">BU107</name>
</gene>
<proteinExistence type="inferred from homology"/>
<sequence>MSRQQIGVVGMAVMGRNLALNIESKNYSVSIFNRTRSVTEEVFNQNKKKNIVPYFSIKDFIDSLLKPRCILLMVQSGKATDETIKMILPYLEKEDILIDAGNTFYKDTIRRNEKLSKYEINFIGMGVSGGELGALNGPSIMPGGQKEAYKLVLPMLEKISAKFKGEPCVSYIGPNGAGHYVKMVHNGIEYGDMQLISESYFLLKYLLNMSNEELSSTFSKWNKGELNSYLIEITKNIFIEKDEKGKYLIDRILDVAEDKGTGKWISKSALDLREPLSLITESVFARYLSSLKRQRIIASKILQGPKIKTFIKDKNSFIEEVRRALYLGKIISYAQGFSQLKRASEKYHWNLKYGEIAKIFRAGCIIRANFLQKITDEYTQNKNVVNLLLTPYFSKIANEYENSLRNIVMYAIKYGISTPTFSAAISYYDSYRALYLPANLIQAQRDYFGSHTYQRTDQTGYFHTNWSQ</sequence>
<protein>
    <recommendedName>
        <fullName>6-phosphogluconate dehydrogenase, decarboxylating</fullName>
        <ecNumber>1.1.1.44</ecNumber>
    </recommendedName>
</protein>
<evidence type="ECO:0000250" key="1"/>
<evidence type="ECO:0000305" key="2"/>
<feature type="chain" id="PRO_0000090028" description="6-phosphogluconate dehydrogenase, decarboxylating">
    <location>
        <begin position="1"/>
        <end position="468"/>
    </location>
</feature>
<feature type="active site" description="Proton acceptor" evidence="1">
    <location>
        <position position="182"/>
    </location>
</feature>
<feature type="active site" description="Proton donor" evidence="1">
    <location>
        <position position="189"/>
    </location>
</feature>
<feature type="binding site" evidence="1">
    <location>
        <begin position="10"/>
        <end position="15"/>
    </location>
    <ligand>
        <name>NADP(+)</name>
        <dbReference type="ChEBI" id="CHEBI:58349"/>
    </ligand>
</feature>
<feature type="binding site" evidence="1">
    <location>
        <begin position="33"/>
        <end position="35"/>
    </location>
    <ligand>
        <name>NADP(+)</name>
        <dbReference type="ChEBI" id="CHEBI:58349"/>
    </ligand>
</feature>
<feature type="binding site" evidence="1">
    <location>
        <begin position="74"/>
        <end position="76"/>
    </location>
    <ligand>
        <name>NADP(+)</name>
        <dbReference type="ChEBI" id="CHEBI:58349"/>
    </ligand>
</feature>
<feature type="binding site" evidence="1">
    <location>
        <position position="102"/>
    </location>
    <ligand>
        <name>NADP(+)</name>
        <dbReference type="ChEBI" id="CHEBI:58349"/>
    </ligand>
</feature>
<feature type="binding site" description="in other chain" evidence="1">
    <location>
        <position position="102"/>
    </location>
    <ligand>
        <name>substrate</name>
        <note>ligand shared between dimeric partners</note>
    </ligand>
</feature>
<feature type="binding site" description="in other chain" evidence="1">
    <location>
        <begin position="128"/>
        <end position="130"/>
    </location>
    <ligand>
        <name>substrate</name>
        <note>ligand shared between dimeric partners</note>
    </ligand>
</feature>
<feature type="binding site" description="in other chain" evidence="1">
    <location>
        <begin position="185"/>
        <end position="186"/>
    </location>
    <ligand>
        <name>substrate</name>
        <note>ligand shared between dimeric partners</note>
    </ligand>
</feature>
<feature type="binding site" description="in other chain" evidence="1">
    <location>
        <position position="190"/>
    </location>
    <ligand>
        <name>substrate</name>
        <note>ligand shared between dimeric partners</note>
    </ligand>
</feature>
<feature type="binding site" description="in other chain" evidence="1">
    <location>
        <position position="259"/>
    </location>
    <ligand>
        <name>substrate</name>
        <note>ligand shared between dimeric partners</note>
    </ligand>
</feature>
<feature type="binding site" description="in other chain" evidence="1">
    <location>
        <position position="286"/>
    </location>
    <ligand>
        <name>substrate</name>
        <note>ligand shared between dimeric partners</note>
    </ligand>
</feature>
<feature type="binding site" evidence="1">
    <location>
        <position position="445"/>
    </location>
    <ligand>
        <name>substrate</name>
        <note>ligand shared between dimeric partners</note>
    </ligand>
</feature>
<feature type="binding site" evidence="1">
    <location>
        <position position="451"/>
    </location>
    <ligand>
        <name>substrate</name>
        <note>ligand shared between dimeric partners</note>
    </ligand>
</feature>
<reference key="1">
    <citation type="journal article" date="2000" name="Nature">
        <title>Genome sequence of the endocellular bacterial symbiont of aphids Buchnera sp. APS.</title>
        <authorList>
            <person name="Shigenobu S."/>
            <person name="Watanabe H."/>
            <person name="Hattori M."/>
            <person name="Sakaki Y."/>
            <person name="Ishikawa H."/>
        </authorList>
    </citation>
    <scope>NUCLEOTIDE SEQUENCE [LARGE SCALE GENOMIC DNA]</scope>
    <source>
        <strain>APS</strain>
    </source>
</reference>
<comment type="function">
    <text evidence="1">Catalyzes the oxidative decarboxylation of 6-phosphogluconate to ribulose 5-phosphate and CO(2), with concomitant reduction of NADP to NADPH.</text>
</comment>
<comment type="catalytic activity">
    <reaction>
        <text>6-phospho-D-gluconate + NADP(+) = D-ribulose 5-phosphate + CO2 + NADPH</text>
        <dbReference type="Rhea" id="RHEA:10116"/>
        <dbReference type="ChEBI" id="CHEBI:16526"/>
        <dbReference type="ChEBI" id="CHEBI:57783"/>
        <dbReference type="ChEBI" id="CHEBI:58121"/>
        <dbReference type="ChEBI" id="CHEBI:58349"/>
        <dbReference type="ChEBI" id="CHEBI:58759"/>
        <dbReference type="EC" id="1.1.1.44"/>
    </reaction>
</comment>
<comment type="pathway">
    <text>Carbohydrate degradation; pentose phosphate pathway; D-ribulose 5-phosphate from D-glucose 6-phosphate (oxidative stage): step 3/3.</text>
</comment>
<comment type="subunit">
    <text evidence="1">Homodimer.</text>
</comment>
<comment type="similarity">
    <text evidence="2">Belongs to the 6-phosphogluconate dehydrogenase family.</text>
</comment>
<name>6PGD_BUCAI</name>
<organism>
    <name type="scientific">Buchnera aphidicola subsp. Acyrthosiphon pisum (strain APS)</name>
    <name type="common">Acyrthosiphon pisum symbiotic bacterium</name>
    <dbReference type="NCBI Taxonomy" id="107806"/>
    <lineage>
        <taxon>Bacteria</taxon>
        <taxon>Pseudomonadati</taxon>
        <taxon>Pseudomonadota</taxon>
        <taxon>Gammaproteobacteria</taxon>
        <taxon>Enterobacterales</taxon>
        <taxon>Erwiniaceae</taxon>
        <taxon>Buchnera</taxon>
    </lineage>
</organism>
<accession>P57208</accession>